<name>CENPA_CANGA</name>
<proteinExistence type="inferred from homology"/>
<organism>
    <name type="scientific">Candida glabrata (strain ATCC 2001 / BCRC 20586 / JCM 3761 / NBRC 0622 / NRRL Y-65 / CBS 138)</name>
    <name type="common">Yeast</name>
    <name type="synonym">Nakaseomyces glabratus</name>
    <dbReference type="NCBI Taxonomy" id="284593"/>
    <lineage>
        <taxon>Eukaryota</taxon>
        <taxon>Fungi</taxon>
        <taxon>Dikarya</taxon>
        <taxon>Ascomycota</taxon>
        <taxon>Saccharomycotina</taxon>
        <taxon>Saccharomycetes</taxon>
        <taxon>Saccharomycetales</taxon>
        <taxon>Saccharomycetaceae</taxon>
        <taxon>Nakaseomyces</taxon>
    </lineage>
</organism>
<accession>Q874J6</accession>
<accession>Q6FIM9</accession>
<protein>
    <recommendedName>
        <fullName>Histone H3-like centromeric protein CSE4</fullName>
    </recommendedName>
    <alternativeName>
        <fullName>CENP-A homolog</fullName>
    </alternativeName>
    <alternativeName>
        <fullName evidence="3">CENPA homolog</fullName>
    </alternativeName>
</protein>
<comment type="function">
    <text evidence="1">Histone H3-like nucleosomal protein that is specifically found in centromeric nucleosomes. Replaces conventional H3 in the nucleosome core of centromeric chromatin that serves as an assembly site for the inner kinetochore. Required for recruitment and assembly of kinetochore proteins, mitotic progression and chromosome segregation. May serve as an epigenetic mark that propagates centromere identity through replication and cell division (By similarity).</text>
</comment>
<comment type="subunit">
    <text evidence="1">Component of centromeric nucleosomes, where DNA is wrapped around a histone octamer core. The octamer contains two molecules each of H2A, H2B, CSE4/CENPA and H4 assembled in one CSE4-H4 heterotetramer and two H2A-H2B heterodimers. Interacts with the inner kinetochore.</text>
</comment>
<comment type="subcellular location">
    <subcellularLocation>
        <location evidence="1">Nucleus</location>
    </subcellularLocation>
    <subcellularLocation>
        <location evidence="1">Chromosome</location>
        <location evidence="1">Centromere</location>
    </subcellularLocation>
</comment>
<comment type="PTM">
    <text evidence="1">Ubiquitinated. Is degraded through ubiquitin-mediated proteolysis when not protected by its association to the kinetochore.</text>
</comment>
<comment type="similarity">
    <text evidence="3">Belongs to the histone H3 family.</text>
</comment>
<gene>
    <name type="primary">CSE4</name>
    <name type="ordered locus">CAGL0M13145g</name>
</gene>
<reference key="1">
    <citation type="journal article" date="2004" name="Eukaryot. Cell">
        <title>Inner kinetochore of the pathogenic yeast Candida glabrata.</title>
        <authorList>
            <person name="Stoyan T."/>
            <person name="Carbon J."/>
        </authorList>
    </citation>
    <scope>NUCLEOTIDE SEQUENCE [GENOMIC DNA]</scope>
</reference>
<reference key="2">
    <citation type="journal article" date="2004" name="Nature">
        <title>Genome evolution in yeasts.</title>
        <authorList>
            <person name="Dujon B."/>
            <person name="Sherman D."/>
            <person name="Fischer G."/>
            <person name="Durrens P."/>
            <person name="Casaregola S."/>
            <person name="Lafontaine I."/>
            <person name="de Montigny J."/>
            <person name="Marck C."/>
            <person name="Neuveglise C."/>
            <person name="Talla E."/>
            <person name="Goffard N."/>
            <person name="Frangeul L."/>
            <person name="Aigle M."/>
            <person name="Anthouard V."/>
            <person name="Babour A."/>
            <person name="Barbe V."/>
            <person name="Barnay S."/>
            <person name="Blanchin S."/>
            <person name="Beckerich J.-M."/>
            <person name="Beyne E."/>
            <person name="Bleykasten C."/>
            <person name="Boisrame A."/>
            <person name="Boyer J."/>
            <person name="Cattolico L."/>
            <person name="Confanioleri F."/>
            <person name="de Daruvar A."/>
            <person name="Despons L."/>
            <person name="Fabre E."/>
            <person name="Fairhead C."/>
            <person name="Ferry-Dumazet H."/>
            <person name="Groppi A."/>
            <person name="Hantraye F."/>
            <person name="Hennequin C."/>
            <person name="Jauniaux N."/>
            <person name="Joyet P."/>
            <person name="Kachouri R."/>
            <person name="Kerrest A."/>
            <person name="Koszul R."/>
            <person name="Lemaire M."/>
            <person name="Lesur I."/>
            <person name="Ma L."/>
            <person name="Muller H."/>
            <person name="Nicaud J.-M."/>
            <person name="Nikolski M."/>
            <person name="Oztas S."/>
            <person name="Ozier-Kalogeropoulos O."/>
            <person name="Pellenz S."/>
            <person name="Potier S."/>
            <person name="Richard G.-F."/>
            <person name="Straub M.-L."/>
            <person name="Suleau A."/>
            <person name="Swennen D."/>
            <person name="Tekaia F."/>
            <person name="Wesolowski-Louvel M."/>
            <person name="Westhof E."/>
            <person name="Wirth B."/>
            <person name="Zeniou-Meyer M."/>
            <person name="Zivanovic Y."/>
            <person name="Bolotin-Fukuhara M."/>
            <person name="Thierry A."/>
            <person name="Bouchier C."/>
            <person name="Caudron B."/>
            <person name="Scarpelli C."/>
            <person name="Gaillardin C."/>
            <person name="Weissenbach J."/>
            <person name="Wincker P."/>
            <person name="Souciet J.-L."/>
        </authorList>
    </citation>
    <scope>NUCLEOTIDE SEQUENCE [LARGE SCALE GENOMIC DNA]</scope>
    <source>
        <strain>ATCC 2001 / BCRC 20586 / JCM 3761 / NBRC 0622 / NRRL Y-65 / CBS 138</strain>
    </source>
</reference>
<evidence type="ECO:0000250" key="1">
    <source>
        <dbReference type="UniProtKB" id="P36012"/>
    </source>
</evidence>
<evidence type="ECO:0000256" key="2">
    <source>
        <dbReference type="SAM" id="MobiDB-lite"/>
    </source>
</evidence>
<evidence type="ECO:0000305" key="3"/>
<dbReference type="EMBL" id="AY230411">
    <property type="protein sequence ID" value="AAO73467.1"/>
    <property type="molecule type" value="Genomic_DNA"/>
</dbReference>
<dbReference type="EMBL" id="CR380959">
    <property type="protein sequence ID" value="CAG62895.1"/>
    <property type="molecule type" value="Genomic_DNA"/>
</dbReference>
<dbReference type="RefSeq" id="XP_449915.1">
    <property type="nucleotide sequence ID" value="XM_449915.1"/>
</dbReference>
<dbReference type="SMR" id="Q874J6"/>
<dbReference type="FunCoup" id="Q874J6">
    <property type="interactions" value="394"/>
</dbReference>
<dbReference type="STRING" id="284593.Q874J6"/>
<dbReference type="EnsemblFungi" id="CAGL0M13145g-T">
    <property type="protein sequence ID" value="CAGL0M13145g-T-p1"/>
    <property type="gene ID" value="CAGL0M13145g"/>
</dbReference>
<dbReference type="GeneID" id="2891205"/>
<dbReference type="KEGG" id="cgr:2891205"/>
<dbReference type="CGD" id="CAL0137371">
    <property type="gene designation" value="CSE4"/>
</dbReference>
<dbReference type="VEuPathDB" id="FungiDB:B1J91_M13145g"/>
<dbReference type="VEuPathDB" id="FungiDB:CAGL0M13145g"/>
<dbReference type="eggNOG" id="KOG1745">
    <property type="taxonomic scope" value="Eukaryota"/>
</dbReference>
<dbReference type="HOGENOM" id="CLU_078295_3_0_1"/>
<dbReference type="InParanoid" id="Q874J6"/>
<dbReference type="Proteomes" id="UP000002428">
    <property type="component" value="Chromosome M"/>
</dbReference>
<dbReference type="GO" id="GO:0005729">
    <property type="term" value="C:2-micrometer circle DNA"/>
    <property type="evidence" value="ECO:0007669"/>
    <property type="project" value="EnsemblFungi"/>
</dbReference>
<dbReference type="GO" id="GO:0043505">
    <property type="term" value="C:CENP-A containing nucleosome"/>
    <property type="evidence" value="ECO:0007669"/>
    <property type="project" value="EnsemblFungi"/>
</dbReference>
<dbReference type="GO" id="GO:0000776">
    <property type="term" value="C:kinetochore"/>
    <property type="evidence" value="ECO:0007669"/>
    <property type="project" value="EnsemblFungi"/>
</dbReference>
<dbReference type="GO" id="GO:0005634">
    <property type="term" value="C:nucleus"/>
    <property type="evidence" value="ECO:0007669"/>
    <property type="project" value="UniProtKB-SubCell"/>
</dbReference>
<dbReference type="GO" id="GO:0005777">
    <property type="term" value="C:peroxisome"/>
    <property type="evidence" value="ECO:0007669"/>
    <property type="project" value="EnsemblFungi"/>
</dbReference>
<dbReference type="GO" id="GO:0019237">
    <property type="term" value="F:centromeric DNA binding"/>
    <property type="evidence" value="ECO:0007669"/>
    <property type="project" value="EnsemblFungi"/>
</dbReference>
<dbReference type="GO" id="GO:0046982">
    <property type="term" value="F:protein heterodimerization activity"/>
    <property type="evidence" value="ECO:0007669"/>
    <property type="project" value="InterPro"/>
</dbReference>
<dbReference type="GO" id="GO:0030527">
    <property type="term" value="F:structural constituent of chromatin"/>
    <property type="evidence" value="ECO:0007669"/>
    <property type="project" value="InterPro"/>
</dbReference>
<dbReference type="GO" id="GO:0030543">
    <property type="term" value="P:2-micrometer plasmid partitioning"/>
    <property type="evidence" value="ECO:0007669"/>
    <property type="project" value="EnsemblFungi"/>
</dbReference>
<dbReference type="GO" id="GO:0051382">
    <property type="term" value="P:kinetochore assembly"/>
    <property type="evidence" value="ECO:0007669"/>
    <property type="project" value="EnsemblFungi"/>
</dbReference>
<dbReference type="GO" id="GO:0000070">
    <property type="term" value="P:mitotic sister chromatid segregation"/>
    <property type="evidence" value="ECO:0007669"/>
    <property type="project" value="EnsemblFungi"/>
</dbReference>
<dbReference type="GO" id="GO:0061644">
    <property type="term" value="P:protein localization to CENP-A containing chromatin"/>
    <property type="evidence" value="ECO:0007669"/>
    <property type="project" value="EnsemblFungi"/>
</dbReference>
<dbReference type="CDD" id="cd22911">
    <property type="entry name" value="HFD_H3"/>
    <property type="match status" value="1"/>
</dbReference>
<dbReference type="FunFam" id="1.10.20.10:FF:000102">
    <property type="entry name" value="Histone H3-like centromeric protein CSE4"/>
    <property type="match status" value="1"/>
</dbReference>
<dbReference type="Gene3D" id="1.10.20.10">
    <property type="entry name" value="Histone, subunit A"/>
    <property type="match status" value="1"/>
</dbReference>
<dbReference type="InterPro" id="IPR009072">
    <property type="entry name" value="Histone-fold"/>
</dbReference>
<dbReference type="InterPro" id="IPR007125">
    <property type="entry name" value="Histone_H2A/H2B/H3"/>
</dbReference>
<dbReference type="InterPro" id="IPR000164">
    <property type="entry name" value="Histone_H3/CENP-A"/>
</dbReference>
<dbReference type="PANTHER" id="PTHR45810:SF17">
    <property type="entry name" value="HISTONE H3-LIKE CENTROMERIC PROTEIN A"/>
    <property type="match status" value="1"/>
</dbReference>
<dbReference type="PANTHER" id="PTHR45810">
    <property type="entry name" value="HISTONE H3.2"/>
    <property type="match status" value="1"/>
</dbReference>
<dbReference type="Pfam" id="PF00125">
    <property type="entry name" value="Histone"/>
    <property type="match status" value="1"/>
</dbReference>
<dbReference type="PRINTS" id="PR00622">
    <property type="entry name" value="HISTONEH3"/>
</dbReference>
<dbReference type="SMART" id="SM00428">
    <property type="entry name" value="H3"/>
    <property type="match status" value="1"/>
</dbReference>
<dbReference type="SUPFAM" id="SSF47113">
    <property type="entry name" value="Histone-fold"/>
    <property type="match status" value="1"/>
</dbReference>
<feature type="chain" id="PRO_0000270597" description="Histone H3-like centromeric protein CSE4">
    <location>
        <begin position="1"/>
        <end position="240"/>
    </location>
</feature>
<feature type="region of interest" description="Disordered" evidence="2">
    <location>
        <begin position="83"/>
        <end position="109"/>
    </location>
</feature>
<feature type="region of interest" description="H3-like">
    <location>
        <begin position="127"/>
        <end position="238"/>
    </location>
</feature>
<keyword id="KW-0137">Centromere</keyword>
<keyword id="KW-0158">Chromosome</keyword>
<keyword id="KW-0238">DNA-binding</keyword>
<keyword id="KW-0544">Nucleosome core</keyword>
<keyword id="KW-0539">Nucleus</keyword>
<keyword id="KW-1185">Reference proteome</keyword>
<keyword id="KW-0832">Ubl conjugation</keyword>
<sequence>MSTRQAVFERDVDEDRWPRSARGLAGVNTVFEGDSEINSKAMRLLEKTRHRRNLLNRREDRRRYLGGVKAKAIESDYYHRNQLPSSYDAGNDDFEPINNSHVESEEENKRLPEKYSLDKYVKRSRKQRDHRHIVAKPKEKRNFAPSKLAMYEIEKYQRSTALLIQKIPFAKLVKEVTEEFAGESQDLRWQSMAILALQEASEAYLVGLLEHTNLLALHAKRITIMKKDMQLARRIRGQFI</sequence>